<feature type="chain" id="PRO_0000230919" description="Glucose-6-phosphate isomerase">
    <location>
        <begin position="1"/>
        <end position="448"/>
    </location>
</feature>
<feature type="active site" description="Proton donor" evidence="1">
    <location>
        <position position="290"/>
    </location>
</feature>
<feature type="active site" evidence="1">
    <location>
        <position position="311"/>
    </location>
</feature>
<feature type="active site" evidence="1">
    <location>
        <position position="425"/>
    </location>
</feature>
<sequence length="448" mass="49499">MAHISFDASRLDKFVQSNELAEMQAMVNAADSQLREGTGAGNDFRGFLDLPVNYDKDEFARIKEAVAKIKSDSEIFVAIGIGGSYLGAKAAIDFLNNTFYNMLPAEQRDFPQVLFAGNSISSSYLSDLVNLIGDRDFSINVISKSGTTTEPSIAFRVLKDKLIKKYGKEEAKGRIYATTDRAKGALKTESDAEGYAEFVVPDDIGGRFSVLTAVGLLPIAVAGGDIDQLMKGAADARLEYTDTDVTKNDAYKYAALRNILYRKGYTTELLENYEPTLQYFSEWWKQLMGESEGKDQKGIYPSSANFSTDLHSLGQYIQEGRRNLMETVVNVEKPNSDIDIPADEQNLDGLGYLEGHTMDFVNKKAYQGVVLAHTDGGVPVMTVNIPDQTAYTLGYMIYFFEMAVSISGYLNGINPFNQPGVEAYKKNMFALLGKPGFEELGKELNERL</sequence>
<gene>
    <name evidence="1" type="primary">pgi</name>
    <name type="ordered locus">LCA_1179</name>
</gene>
<accession>Q38WF1</accession>
<organism>
    <name type="scientific">Latilactobacillus sakei subsp. sakei (strain 23K)</name>
    <name type="common">Lactobacillus sakei subsp. sakei</name>
    <dbReference type="NCBI Taxonomy" id="314315"/>
    <lineage>
        <taxon>Bacteria</taxon>
        <taxon>Bacillati</taxon>
        <taxon>Bacillota</taxon>
        <taxon>Bacilli</taxon>
        <taxon>Lactobacillales</taxon>
        <taxon>Lactobacillaceae</taxon>
        <taxon>Latilactobacillus</taxon>
    </lineage>
</organism>
<name>G6PI_LATSS</name>
<comment type="function">
    <text evidence="1">Catalyzes the reversible isomerization of glucose-6-phosphate to fructose-6-phosphate.</text>
</comment>
<comment type="catalytic activity">
    <reaction evidence="1">
        <text>alpha-D-glucose 6-phosphate = beta-D-fructose 6-phosphate</text>
        <dbReference type="Rhea" id="RHEA:11816"/>
        <dbReference type="ChEBI" id="CHEBI:57634"/>
        <dbReference type="ChEBI" id="CHEBI:58225"/>
        <dbReference type="EC" id="5.3.1.9"/>
    </reaction>
</comment>
<comment type="pathway">
    <text evidence="1">Carbohydrate biosynthesis; gluconeogenesis.</text>
</comment>
<comment type="pathway">
    <text evidence="1">Carbohydrate degradation; glycolysis; D-glyceraldehyde 3-phosphate and glycerone phosphate from D-glucose: step 2/4.</text>
</comment>
<comment type="subcellular location">
    <subcellularLocation>
        <location evidence="1">Cytoplasm</location>
    </subcellularLocation>
</comment>
<comment type="similarity">
    <text evidence="1">Belongs to the GPI family.</text>
</comment>
<dbReference type="EC" id="5.3.1.9" evidence="1"/>
<dbReference type="EMBL" id="CR936503">
    <property type="protein sequence ID" value="CAI55481.1"/>
    <property type="molecule type" value="Genomic_DNA"/>
</dbReference>
<dbReference type="RefSeq" id="WP_011374877.1">
    <property type="nucleotide sequence ID" value="NC_007576.1"/>
</dbReference>
<dbReference type="SMR" id="Q38WF1"/>
<dbReference type="STRING" id="314315.LCA_1179"/>
<dbReference type="KEGG" id="lsa:LCA_1179"/>
<dbReference type="eggNOG" id="COG0166">
    <property type="taxonomic scope" value="Bacteria"/>
</dbReference>
<dbReference type="HOGENOM" id="CLU_037303_0_1_9"/>
<dbReference type="OrthoDB" id="140919at2"/>
<dbReference type="UniPathway" id="UPA00109">
    <property type="reaction ID" value="UER00181"/>
</dbReference>
<dbReference type="UniPathway" id="UPA00138"/>
<dbReference type="Proteomes" id="UP000002707">
    <property type="component" value="Chromosome"/>
</dbReference>
<dbReference type="GO" id="GO:0005829">
    <property type="term" value="C:cytosol"/>
    <property type="evidence" value="ECO:0007669"/>
    <property type="project" value="TreeGrafter"/>
</dbReference>
<dbReference type="GO" id="GO:0097367">
    <property type="term" value="F:carbohydrate derivative binding"/>
    <property type="evidence" value="ECO:0007669"/>
    <property type="project" value="InterPro"/>
</dbReference>
<dbReference type="GO" id="GO:0004347">
    <property type="term" value="F:glucose-6-phosphate isomerase activity"/>
    <property type="evidence" value="ECO:0007669"/>
    <property type="project" value="UniProtKB-UniRule"/>
</dbReference>
<dbReference type="GO" id="GO:0048029">
    <property type="term" value="F:monosaccharide binding"/>
    <property type="evidence" value="ECO:0007669"/>
    <property type="project" value="TreeGrafter"/>
</dbReference>
<dbReference type="GO" id="GO:0006094">
    <property type="term" value="P:gluconeogenesis"/>
    <property type="evidence" value="ECO:0007669"/>
    <property type="project" value="UniProtKB-UniRule"/>
</dbReference>
<dbReference type="GO" id="GO:0051156">
    <property type="term" value="P:glucose 6-phosphate metabolic process"/>
    <property type="evidence" value="ECO:0007669"/>
    <property type="project" value="TreeGrafter"/>
</dbReference>
<dbReference type="GO" id="GO:0006096">
    <property type="term" value="P:glycolytic process"/>
    <property type="evidence" value="ECO:0007669"/>
    <property type="project" value="UniProtKB-UniRule"/>
</dbReference>
<dbReference type="CDD" id="cd05015">
    <property type="entry name" value="SIS_PGI_1"/>
    <property type="match status" value="1"/>
</dbReference>
<dbReference type="CDD" id="cd05016">
    <property type="entry name" value="SIS_PGI_2"/>
    <property type="match status" value="1"/>
</dbReference>
<dbReference type="FunFam" id="3.40.50.10490:FF:000015">
    <property type="entry name" value="Glucose-6-phosphate isomerase"/>
    <property type="match status" value="1"/>
</dbReference>
<dbReference type="FunFam" id="3.40.50.10490:FF:000016">
    <property type="entry name" value="Glucose-6-phosphate isomerase"/>
    <property type="match status" value="1"/>
</dbReference>
<dbReference type="Gene3D" id="3.40.50.10490">
    <property type="entry name" value="Glucose-6-phosphate isomerase like protein, domain 1"/>
    <property type="match status" value="3"/>
</dbReference>
<dbReference type="HAMAP" id="MF_00473">
    <property type="entry name" value="G6P_isomerase"/>
    <property type="match status" value="1"/>
</dbReference>
<dbReference type="InterPro" id="IPR001672">
    <property type="entry name" value="G6P_Isomerase"/>
</dbReference>
<dbReference type="InterPro" id="IPR018189">
    <property type="entry name" value="Phosphoglucose_isomerase_CS"/>
</dbReference>
<dbReference type="InterPro" id="IPR046348">
    <property type="entry name" value="SIS_dom_sf"/>
</dbReference>
<dbReference type="InterPro" id="IPR035476">
    <property type="entry name" value="SIS_PGI_1"/>
</dbReference>
<dbReference type="InterPro" id="IPR035482">
    <property type="entry name" value="SIS_PGI_2"/>
</dbReference>
<dbReference type="NCBIfam" id="NF010697">
    <property type="entry name" value="PRK14097.1"/>
    <property type="match status" value="1"/>
</dbReference>
<dbReference type="PANTHER" id="PTHR11469">
    <property type="entry name" value="GLUCOSE-6-PHOSPHATE ISOMERASE"/>
    <property type="match status" value="1"/>
</dbReference>
<dbReference type="PANTHER" id="PTHR11469:SF1">
    <property type="entry name" value="GLUCOSE-6-PHOSPHATE ISOMERASE"/>
    <property type="match status" value="1"/>
</dbReference>
<dbReference type="Pfam" id="PF00342">
    <property type="entry name" value="PGI"/>
    <property type="match status" value="1"/>
</dbReference>
<dbReference type="PRINTS" id="PR00662">
    <property type="entry name" value="G6PISOMERASE"/>
</dbReference>
<dbReference type="SUPFAM" id="SSF53697">
    <property type="entry name" value="SIS domain"/>
    <property type="match status" value="1"/>
</dbReference>
<dbReference type="PROSITE" id="PS00765">
    <property type="entry name" value="P_GLUCOSE_ISOMERASE_1"/>
    <property type="match status" value="1"/>
</dbReference>
<dbReference type="PROSITE" id="PS00174">
    <property type="entry name" value="P_GLUCOSE_ISOMERASE_2"/>
    <property type="match status" value="1"/>
</dbReference>
<dbReference type="PROSITE" id="PS51463">
    <property type="entry name" value="P_GLUCOSE_ISOMERASE_3"/>
    <property type="match status" value="1"/>
</dbReference>
<reference key="1">
    <citation type="journal article" date="2005" name="Nat. Biotechnol.">
        <title>The complete genome sequence of the meat-borne lactic acid bacterium Lactobacillus sakei 23K.</title>
        <authorList>
            <person name="Chaillou S."/>
            <person name="Champomier-Verges M.-C."/>
            <person name="Cornet M."/>
            <person name="Crutz-Le Coq A.-M."/>
            <person name="Dudez A.-M."/>
            <person name="Martin V."/>
            <person name="Beaufils S."/>
            <person name="Darbon-Rongere E."/>
            <person name="Bossy R."/>
            <person name="Loux V."/>
            <person name="Zagorec M."/>
        </authorList>
    </citation>
    <scope>NUCLEOTIDE SEQUENCE [LARGE SCALE GENOMIC DNA]</scope>
    <source>
        <strain>23K</strain>
    </source>
</reference>
<proteinExistence type="inferred from homology"/>
<keyword id="KW-0963">Cytoplasm</keyword>
<keyword id="KW-0312">Gluconeogenesis</keyword>
<keyword id="KW-0324">Glycolysis</keyword>
<keyword id="KW-0413">Isomerase</keyword>
<keyword id="KW-1185">Reference proteome</keyword>
<evidence type="ECO:0000255" key="1">
    <source>
        <dbReference type="HAMAP-Rule" id="MF_00473"/>
    </source>
</evidence>
<protein>
    <recommendedName>
        <fullName evidence="1">Glucose-6-phosphate isomerase</fullName>
        <shortName evidence="1">GPI</shortName>
        <ecNumber evidence="1">5.3.1.9</ecNumber>
    </recommendedName>
    <alternativeName>
        <fullName evidence="1">Phosphoglucose isomerase</fullName>
        <shortName evidence="1">PGI</shortName>
    </alternativeName>
    <alternativeName>
        <fullName evidence="1">Phosphohexose isomerase</fullName>
        <shortName evidence="1">PHI</shortName>
    </alternativeName>
</protein>